<reference key="1">
    <citation type="submission" date="1989-03" db="EMBL/GenBank/DDBJ databases">
        <authorList>
            <person name="Neumann H."/>
        </authorList>
    </citation>
    <scope>NUCLEOTIDE SEQUENCE [GENOMIC DNA]</scope>
</reference>
<feature type="chain" id="PRO_0000222983" description="Uncharacterized 7.3 kDa protein">
    <location>
        <begin position="1"/>
        <end position="63"/>
    </location>
</feature>
<protein>
    <recommendedName>
        <fullName>Uncharacterized 7.3 kDa protein</fullName>
    </recommendedName>
</protein>
<accession>P19301</accession>
<organism>
    <name type="scientific">Thermoproteus tenax virus 1 (strain KRA1)</name>
    <name type="common">TTV1</name>
    <dbReference type="NCBI Taxonomy" id="10480"/>
    <lineage>
        <taxon>Viruses</taxon>
        <taxon>Adnaviria</taxon>
        <taxon>Zilligvirae</taxon>
        <taxon>Taleaviricota</taxon>
        <taxon>Tokiviricetes</taxon>
        <taxon>Primavirales</taxon>
        <taxon>Tristromaviridae</taxon>
        <taxon>Betatristromavirus</taxon>
        <taxon>Betatristromavirus TTV1</taxon>
    </lineage>
</organism>
<dbReference type="EMBL" id="X14855">
    <property type="protein sequence ID" value="CAA32997.1"/>
    <property type="molecule type" value="Genomic_DNA"/>
</dbReference>
<dbReference type="Proteomes" id="UP000009250">
    <property type="component" value="Genome"/>
</dbReference>
<name>YORQ_TTV1K</name>
<sequence>MLNLHLLYTLEITYSVQSRIVIYIKYYYSVSYMASLLHSLSSRPIIVYYSLYCTSPSIHNGML</sequence>
<organismHost>
    <name type="scientific">Thermoproteus tenax</name>
    <dbReference type="NCBI Taxonomy" id="2271"/>
</organismHost>
<proteinExistence type="predicted"/>
<keyword id="KW-1185">Reference proteome</keyword>